<accession>B1IQH2</accession>
<name>RS2_ECOLC</name>
<proteinExistence type="inferred from homology"/>
<keyword id="KW-0687">Ribonucleoprotein</keyword>
<keyword id="KW-0689">Ribosomal protein</keyword>
<comment type="similarity">
    <text evidence="1">Belongs to the universal ribosomal protein uS2 family.</text>
</comment>
<feature type="chain" id="PRO_1000078880" description="Small ribosomal subunit protein uS2">
    <location>
        <begin position="1"/>
        <end position="241"/>
    </location>
</feature>
<dbReference type="EMBL" id="CP000946">
    <property type="protein sequence ID" value="ACA79105.1"/>
    <property type="molecule type" value="Genomic_DNA"/>
</dbReference>
<dbReference type="RefSeq" id="WP_000246882.1">
    <property type="nucleotide sequence ID" value="NZ_MTFT01000035.1"/>
</dbReference>
<dbReference type="SMR" id="B1IQH2"/>
<dbReference type="GeneID" id="89519558"/>
<dbReference type="KEGG" id="ecl:EcolC_3491"/>
<dbReference type="HOGENOM" id="CLU_040318_1_2_6"/>
<dbReference type="GO" id="GO:0022627">
    <property type="term" value="C:cytosolic small ribosomal subunit"/>
    <property type="evidence" value="ECO:0007669"/>
    <property type="project" value="TreeGrafter"/>
</dbReference>
<dbReference type="GO" id="GO:0003735">
    <property type="term" value="F:structural constituent of ribosome"/>
    <property type="evidence" value="ECO:0007669"/>
    <property type="project" value="InterPro"/>
</dbReference>
<dbReference type="GO" id="GO:0006412">
    <property type="term" value="P:translation"/>
    <property type="evidence" value="ECO:0007669"/>
    <property type="project" value="UniProtKB-UniRule"/>
</dbReference>
<dbReference type="CDD" id="cd01425">
    <property type="entry name" value="RPS2"/>
    <property type="match status" value="1"/>
</dbReference>
<dbReference type="FunFam" id="1.10.287.610:FF:000001">
    <property type="entry name" value="30S ribosomal protein S2"/>
    <property type="match status" value="1"/>
</dbReference>
<dbReference type="Gene3D" id="3.40.50.10490">
    <property type="entry name" value="Glucose-6-phosphate isomerase like protein, domain 1"/>
    <property type="match status" value="1"/>
</dbReference>
<dbReference type="Gene3D" id="1.10.287.610">
    <property type="entry name" value="Helix hairpin bin"/>
    <property type="match status" value="1"/>
</dbReference>
<dbReference type="HAMAP" id="MF_00291_B">
    <property type="entry name" value="Ribosomal_uS2_B"/>
    <property type="match status" value="1"/>
</dbReference>
<dbReference type="InterPro" id="IPR001865">
    <property type="entry name" value="Ribosomal_uS2"/>
</dbReference>
<dbReference type="InterPro" id="IPR005706">
    <property type="entry name" value="Ribosomal_uS2_bac/mit/plastid"/>
</dbReference>
<dbReference type="InterPro" id="IPR018130">
    <property type="entry name" value="Ribosomal_uS2_CS"/>
</dbReference>
<dbReference type="InterPro" id="IPR023591">
    <property type="entry name" value="Ribosomal_uS2_flav_dom_sf"/>
</dbReference>
<dbReference type="NCBIfam" id="TIGR01011">
    <property type="entry name" value="rpsB_bact"/>
    <property type="match status" value="1"/>
</dbReference>
<dbReference type="PANTHER" id="PTHR12534">
    <property type="entry name" value="30S RIBOSOMAL PROTEIN S2 PROKARYOTIC AND ORGANELLAR"/>
    <property type="match status" value="1"/>
</dbReference>
<dbReference type="PANTHER" id="PTHR12534:SF0">
    <property type="entry name" value="SMALL RIBOSOMAL SUBUNIT PROTEIN US2M"/>
    <property type="match status" value="1"/>
</dbReference>
<dbReference type="Pfam" id="PF00318">
    <property type="entry name" value="Ribosomal_S2"/>
    <property type="match status" value="1"/>
</dbReference>
<dbReference type="PRINTS" id="PR00395">
    <property type="entry name" value="RIBOSOMALS2"/>
</dbReference>
<dbReference type="SUPFAM" id="SSF52313">
    <property type="entry name" value="Ribosomal protein S2"/>
    <property type="match status" value="1"/>
</dbReference>
<dbReference type="PROSITE" id="PS00962">
    <property type="entry name" value="RIBOSOMAL_S2_1"/>
    <property type="match status" value="1"/>
</dbReference>
<dbReference type="PROSITE" id="PS00963">
    <property type="entry name" value="RIBOSOMAL_S2_2"/>
    <property type="match status" value="1"/>
</dbReference>
<sequence length="241" mass="26744">MATVSMRDMLKAGVHFGHQTRYWNPKMKPFIFGARNKVHIINLEKTVPMFNEALAELNKIASRKGKILFVGTKRAASEAVKDAALSCDQFFVNHRWLGGMLTNWKTVRQSIKRLKDLETQSQDGTFDKLTKKEALMRTRELEKLENSLGGIKDMGGLPDALFVIDADHEHIAIKEANNLGIPVFAIVDTNSDPDGVDFVIPGNDDAIRAVTLYLGAVAATVREGRSQDLASQAEESFVEAE</sequence>
<evidence type="ECO:0000255" key="1">
    <source>
        <dbReference type="HAMAP-Rule" id="MF_00291"/>
    </source>
</evidence>
<evidence type="ECO:0000305" key="2"/>
<reference key="1">
    <citation type="submission" date="2008-02" db="EMBL/GenBank/DDBJ databases">
        <title>Complete sequence of Escherichia coli C str. ATCC 8739.</title>
        <authorList>
            <person name="Copeland A."/>
            <person name="Lucas S."/>
            <person name="Lapidus A."/>
            <person name="Glavina del Rio T."/>
            <person name="Dalin E."/>
            <person name="Tice H."/>
            <person name="Bruce D."/>
            <person name="Goodwin L."/>
            <person name="Pitluck S."/>
            <person name="Kiss H."/>
            <person name="Brettin T."/>
            <person name="Detter J.C."/>
            <person name="Han C."/>
            <person name="Kuske C.R."/>
            <person name="Schmutz J."/>
            <person name="Larimer F."/>
            <person name="Land M."/>
            <person name="Hauser L."/>
            <person name="Kyrpides N."/>
            <person name="Mikhailova N."/>
            <person name="Ingram L."/>
            <person name="Richardson P."/>
        </authorList>
    </citation>
    <scope>NUCLEOTIDE SEQUENCE [LARGE SCALE GENOMIC DNA]</scope>
    <source>
        <strain>ATCC 8739 / DSM 1576 / NBRC 3972 / NCIMB 8545 / WDCM 00012 / Crooks</strain>
    </source>
</reference>
<gene>
    <name evidence="1" type="primary">rpsB</name>
    <name type="ordered locus">EcolC_3491</name>
</gene>
<organism>
    <name type="scientific">Escherichia coli (strain ATCC 8739 / DSM 1576 / NBRC 3972 / NCIMB 8545 / WDCM 00012 / Crooks)</name>
    <dbReference type="NCBI Taxonomy" id="481805"/>
    <lineage>
        <taxon>Bacteria</taxon>
        <taxon>Pseudomonadati</taxon>
        <taxon>Pseudomonadota</taxon>
        <taxon>Gammaproteobacteria</taxon>
        <taxon>Enterobacterales</taxon>
        <taxon>Enterobacteriaceae</taxon>
        <taxon>Escherichia</taxon>
    </lineage>
</organism>
<protein>
    <recommendedName>
        <fullName evidence="1">Small ribosomal subunit protein uS2</fullName>
    </recommendedName>
    <alternativeName>
        <fullName evidence="2">30S ribosomal protein S2</fullName>
    </alternativeName>
</protein>